<name>RRF_SHEFN</name>
<organism>
    <name type="scientific">Shewanella frigidimarina (strain NCIMB 400)</name>
    <dbReference type="NCBI Taxonomy" id="318167"/>
    <lineage>
        <taxon>Bacteria</taxon>
        <taxon>Pseudomonadati</taxon>
        <taxon>Pseudomonadota</taxon>
        <taxon>Gammaproteobacteria</taxon>
        <taxon>Alteromonadales</taxon>
        <taxon>Shewanellaceae</taxon>
        <taxon>Shewanella</taxon>
    </lineage>
</organism>
<reference key="1">
    <citation type="submission" date="2006-08" db="EMBL/GenBank/DDBJ databases">
        <title>Complete sequence of Shewanella frigidimarina NCIMB 400.</title>
        <authorList>
            <consortium name="US DOE Joint Genome Institute"/>
            <person name="Copeland A."/>
            <person name="Lucas S."/>
            <person name="Lapidus A."/>
            <person name="Barry K."/>
            <person name="Detter J.C."/>
            <person name="Glavina del Rio T."/>
            <person name="Hammon N."/>
            <person name="Israni S."/>
            <person name="Dalin E."/>
            <person name="Tice H."/>
            <person name="Pitluck S."/>
            <person name="Fredrickson J.K."/>
            <person name="Kolker E."/>
            <person name="McCuel L.A."/>
            <person name="DiChristina T."/>
            <person name="Nealson K.H."/>
            <person name="Newman D."/>
            <person name="Tiedje J.M."/>
            <person name="Zhou J."/>
            <person name="Romine M.F."/>
            <person name="Culley D.E."/>
            <person name="Serres M."/>
            <person name="Chertkov O."/>
            <person name="Brettin T."/>
            <person name="Bruce D."/>
            <person name="Han C."/>
            <person name="Tapia R."/>
            <person name="Gilna P."/>
            <person name="Schmutz J."/>
            <person name="Larimer F."/>
            <person name="Land M."/>
            <person name="Hauser L."/>
            <person name="Kyrpides N."/>
            <person name="Mikhailova N."/>
            <person name="Richardson P."/>
        </authorList>
    </citation>
    <scope>NUCLEOTIDE SEQUENCE [LARGE SCALE GENOMIC DNA]</scope>
    <source>
        <strain>NCIMB 400</strain>
    </source>
</reference>
<accession>Q085D9</accession>
<dbReference type="EMBL" id="CP000447">
    <property type="protein sequence ID" value="ABI71126.1"/>
    <property type="molecule type" value="Genomic_DNA"/>
</dbReference>
<dbReference type="RefSeq" id="WP_011636747.1">
    <property type="nucleotide sequence ID" value="NC_008345.1"/>
</dbReference>
<dbReference type="SMR" id="Q085D9"/>
<dbReference type="STRING" id="318167.Sfri_1273"/>
<dbReference type="KEGG" id="sfr:Sfri_1273"/>
<dbReference type="eggNOG" id="COG0233">
    <property type="taxonomic scope" value="Bacteria"/>
</dbReference>
<dbReference type="HOGENOM" id="CLU_073981_2_1_6"/>
<dbReference type="OrthoDB" id="9804006at2"/>
<dbReference type="Proteomes" id="UP000000684">
    <property type="component" value="Chromosome"/>
</dbReference>
<dbReference type="GO" id="GO:0005829">
    <property type="term" value="C:cytosol"/>
    <property type="evidence" value="ECO:0007669"/>
    <property type="project" value="GOC"/>
</dbReference>
<dbReference type="GO" id="GO:0043023">
    <property type="term" value="F:ribosomal large subunit binding"/>
    <property type="evidence" value="ECO:0007669"/>
    <property type="project" value="TreeGrafter"/>
</dbReference>
<dbReference type="GO" id="GO:0002184">
    <property type="term" value="P:cytoplasmic translational termination"/>
    <property type="evidence" value="ECO:0007669"/>
    <property type="project" value="TreeGrafter"/>
</dbReference>
<dbReference type="CDD" id="cd00520">
    <property type="entry name" value="RRF"/>
    <property type="match status" value="1"/>
</dbReference>
<dbReference type="FunFam" id="1.10.132.20:FF:000001">
    <property type="entry name" value="Ribosome-recycling factor"/>
    <property type="match status" value="1"/>
</dbReference>
<dbReference type="FunFam" id="3.30.1360.40:FF:000001">
    <property type="entry name" value="Ribosome-recycling factor"/>
    <property type="match status" value="1"/>
</dbReference>
<dbReference type="Gene3D" id="3.30.1360.40">
    <property type="match status" value="1"/>
</dbReference>
<dbReference type="Gene3D" id="1.10.132.20">
    <property type="entry name" value="Ribosome-recycling factor"/>
    <property type="match status" value="1"/>
</dbReference>
<dbReference type="HAMAP" id="MF_00040">
    <property type="entry name" value="RRF"/>
    <property type="match status" value="1"/>
</dbReference>
<dbReference type="InterPro" id="IPR002661">
    <property type="entry name" value="Ribosome_recyc_fac"/>
</dbReference>
<dbReference type="InterPro" id="IPR023584">
    <property type="entry name" value="Ribosome_recyc_fac_dom"/>
</dbReference>
<dbReference type="InterPro" id="IPR036191">
    <property type="entry name" value="RRF_sf"/>
</dbReference>
<dbReference type="NCBIfam" id="TIGR00496">
    <property type="entry name" value="frr"/>
    <property type="match status" value="1"/>
</dbReference>
<dbReference type="PANTHER" id="PTHR20982:SF3">
    <property type="entry name" value="MITOCHONDRIAL RIBOSOME RECYCLING FACTOR PSEUDO 1"/>
    <property type="match status" value="1"/>
</dbReference>
<dbReference type="PANTHER" id="PTHR20982">
    <property type="entry name" value="RIBOSOME RECYCLING FACTOR"/>
    <property type="match status" value="1"/>
</dbReference>
<dbReference type="Pfam" id="PF01765">
    <property type="entry name" value="RRF"/>
    <property type="match status" value="1"/>
</dbReference>
<dbReference type="SUPFAM" id="SSF55194">
    <property type="entry name" value="Ribosome recycling factor, RRF"/>
    <property type="match status" value="1"/>
</dbReference>
<sequence>MIDTIMLDAQERMSKCVDATKNQMAKVRTGRAHPSLLDSIQVSCYGSMSPLKQVANVGVEDSRTLTVNVFDRSMVQAVEKAIMSSDLGLNPMSAGATLRIPLPSLTEERRKDFIKVVRNEAENGRIAIRNVRRDAISEVKKLEKAKACTEDDVRRSEDEVQKHTDSSIKNIDQILAAKEKELMEV</sequence>
<feature type="chain" id="PRO_1000003259" description="Ribosome-recycling factor">
    <location>
        <begin position="1"/>
        <end position="185"/>
    </location>
</feature>
<keyword id="KW-0963">Cytoplasm</keyword>
<keyword id="KW-0648">Protein biosynthesis</keyword>
<keyword id="KW-1185">Reference proteome</keyword>
<protein>
    <recommendedName>
        <fullName evidence="1">Ribosome-recycling factor</fullName>
        <shortName evidence="1">RRF</shortName>
    </recommendedName>
    <alternativeName>
        <fullName evidence="1">Ribosome-releasing factor</fullName>
    </alternativeName>
</protein>
<evidence type="ECO:0000255" key="1">
    <source>
        <dbReference type="HAMAP-Rule" id="MF_00040"/>
    </source>
</evidence>
<comment type="function">
    <text evidence="1">Responsible for the release of ribosomes from messenger RNA at the termination of protein biosynthesis. May increase the efficiency of translation by recycling ribosomes from one round of translation to another.</text>
</comment>
<comment type="subcellular location">
    <subcellularLocation>
        <location evidence="1">Cytoplasm</location>
    </subcellularLocation>
</comment>
<comment type="similarity">
    <text evidence="1">Belongs to the RRF family.</text>
</comment>
<gene>
    <name evidence="1" type="primary">frr</name>
    <name type="ordered locus">Sfri_1273</name>
</gene>
<proteinExistence type="inferred from homology"/>